<sequence>MSRIGKLPISIPTGVTVTLKDNVVTVKGPKGELSQFVDPSINVAIEDGHVMLTENENAMLDNVKQRHAFHGLYRSLVNNMVIGVSEGYKKELELVGVGYRASNNGNIIDFALGYTHNIFMQLPPEIKVETKSERNKNPLIILESCDKQLLGQVCSKIRSFRKPEPYKGKGIKFVGEEIRRKSGKSAGAK</sequence>
<organism>
    <name type="scientific">Phocaeicola vulgatus (strain ATCC 8482 / DSM 1447 / JCM 5826 / CCUG 4940 / NBRC 14291 / NCTC 11154)</name>
    <name type="common">Bacteroides vulgatus</name>
    <dbReference type="NCBI Taxonomy" id="435590"/>
    <lineage>
        <taxon>Bacteria</taxon>
        <taxon>Pseudomonadati</taxon>
        <taxon>Bacteroidota</taxon>
        <taxon>Bacteroidia</taxon>
        <taxon>Bacteroidales</taxon>
        <taxon>Bacteroidaceae</taxon>
        <taxon>Phocaeicola</taxon>
    </lineage>
</organism>
<protein>
    <recommendedName>
        <fullName evidence="1">Large ribosomal subunit protein uL6</fullName>
    </recommendedName>
    <alternativeName>
        <fullName evidence="2">50S ribosomal protein L6</fullName>
    </alternativeName>
</protein>
<dbReference type="EMBL" id="CP000139">
    <property type="protein sequence ID" value="ABR38494.1"/>
    <property type="molecule type" value="Genomic_DNA"/>
</dbReference>
<dbReference type="RefSeq" id="WP_005844876.1">
    <property type="nucleotide sequence ID" value="NZ_JANSWM010000035.1"/>
</dbReference>
<dbReference type="SMR" id="A6KYI0"/>
<dbReference type="STRING" id="435590.BVU_0790"/>
<dbReference type="PaxDb" id="435590-BVU_0790"/>
<dbReference type="GeneID" id="5301757"/>
<dbReference type="KEGG" id="bvu:BVU_0790"/>
<dbReference type="eggNOG" id="COG0097">
    <property type="taxonomic scope" value="Bacteria"/>
</dbReference>
<dbReference type="HOGENOM" id="CLU_065464_1_2_10"/>
<dbReference type="BioCyc" id="BVUL435590:G1G59-832-MONOMER"/>
<dbReference type="Proteomes" id="UP000002861">
    <property type="component" value="Chromosome"/>
</dbReference>
<dbReference type="GO" id="GO:0022625">
    <property type="term" value="C:cytosolic large ribosomal subunit"/>
    <property type="evidence" value="ECO:0007669"/>
    <property type="project" value="TreeGrafter"/>
</dbReference>
<dbReference type="GO" id="GO:0019843">
    <property type="term" value="F:rRNA binding"/>
    <property type="evidence" value="ECO:0007669"/>
    <property type="project" value="UniProtKB-UniRule"/>
</dbReference>
<dbReference type="GO" id="GO:0003735">
    <property type="term" value="F:structural constituent of ribosome"/>
    <property type="evidence" value="ECO:0007669"/>
    <property type="project" value="InterPro"/>
</dbReference>
<dbReference type="GO" id="GO:0002181">
    <property type="term" value="P:cytoplasmic translation"/>
    <property type="evidence" value="ECO:0007669"/>
    <property type="project" value="TreeGrafter"/>
</dbReference>
<dbReference type="FunFam" id="3.90.930.12:FF:000002">
    <property type="entry name" value="50S ribosomal protein L6"/>
    <property type="match status" value="1"/>
</dbReference>
<dbReference type="FunFam" id="3.90.930.12:FF:000006">
    <property type="entry name" value="50S ribosomal protein L6"/>
    <property type="match status" value="1"/>
</dbReference>
<dbReference type="Gene3D" id="3.90.930.12">
    <property type="entry name" value="Ribosomal protein L6, alpha-beta domain"/>
    <property type="match status" value="2"/>
</dbReference>
<dbReference type="HAMAP" id="MF_01365_B">
    <property type="entry name" value="Ribosomal_uL6_B"/>
    <property type="match status" value="1"/>
</dbReference>
<dbReference type="InterPro" id="IPR000702">
    <property type="entry name" value="Ribosomal_uL6-like"/>
</dbReference>
<dbReference type="InterPro" id="IPR036789">
    <property type="entry name" value="Ribosomal_uL6-like_a/b-dom_sf"/>
</dbReference>
<dbReference type="InterPro" id="IPR020040">
    <property type="entry name" value="Ribosomal_uL6_a/b-dom"/>
</dbReference>
<dbReference type="InterPro" id="IPR019906">
    <property type="entry name" value="Ribosomal_uL6_bac-type"/>
</dbReference>
<dbReference type="InterPro" id="IPR002358">
    <property type="entry name" value="Ribosomal_uL6_CS"/>
</dbReference>
<dbReference type="NCBIfam" id="TIGR03654">
    <property type="entry name" value="L6_bact"/>
    <property type="match status" value="1"/>
</dbReference>
<dbReference type="PANTHER" id="PTHR11655">
    <property type="entry name" value="60S/50S RIBOSOMAL PROTEIN L6/L9"/>
    <property type="match status" value="1"/>
</dbReference>
<dbReference type="PANTHER" id="PTHR11655:SF14">
    <property type="entry name" value="LARGE RIBOSOMAL SUBUNIT PROTEIN UL6M"/>
    <property type="match status" value="1"/>
</dbReference>
<dbReference type="Pfam" id="PF00347">
    <property type="entry name" value="Ribosomal_L6"/>
    <property type="match status" value="2"/>
</dbReference>
<dbReference type="PIRSF" id="PIRSF002162">
    <property type="entry name" value="Ribosomal_L6"/>
    <property type="match status" value="1"/>
</dbReference>
<dbReference type="PRINTS" id="PR00059">
    <property type="entry name" value="RIBOSOMALL6"/>
</dbReference>
<dbReference type="SUPFAM" id="SSF56053">
    <property type="entry name" value="Ribosomal protein L6"/>
    <property type="match status" value="2"/>
</dbReference>
<dbReference type="PROSITE" id="PS00525">
    <property type="entry name" value="RIBOSOMAL_L6_1"/>
    <property type="match status" value="1"/>
</dbReference>
<proteinExistence type="inferred from homology"/>
<comment type="function">
    <text evidence="1">This protein binds to the 23S rRNA, and is important in its secondary structure. It is located near the subunit interface in the base of the L7/L12 stalk, and near the tRNA binding site of the peptidyltransferase center.</text>
</comment>
<comment type="subunit">
    <text evidence="1">Part of the 50S ribosomal subunit.</text>
</comment>
<comment type="similarity">
    <text evidence="1">Belongs to the universal ribosomal protein uL6 family.</text>
</comment>
<accession>A6KYI0</accession>
<feature type="chain" id="PRO_1000055196" description="Large ribosomal subunit protein uL6">
    <location>
        <begin position="1"/>
        <end position="189"/>
    </location>
</feature>
<evidence type="ECO:0000255" key="1">
    <source>
        <dbReference type="HAMAP-Rule" id="MF_01365"/>
    </source>
</evidence>
<evidence type="ECO:0000305" key="2"/>
<keyword id="KW-0687">Ribonucleoprotein</keyword>
<keyword id="KW-0689">Ribosomal protein</keyword>
<keyword id="KW-0694">RNA-binding</keyword>
<keyword id="KW-0699">rRNA-binding</keyword>
<reference key="1">
    <citation type="journal article" date="2007" name="PLoS Biol.">
        <title>Evolution of symbiotic bacteria in the distal human intestine.</title>
        <authorList>
            <person name="Xu J."/>
            <person name="Mahowald M.A."/>
            <person name="Ley R.E."/>
            <person name="Lozupone C.A."/>
            <person name="Hamady M."/>
            <person name="Martens E.C."/>
            <person name="Henrissat B."/>
            <person name="Coutinho P.M."/>
            <person name="Minx P."/>
            <person name="Latreille P."/>
            <person name="Cordum H."/>
            <person name="Van Brunt A."/>
            <person name="Kim K."/>
            <person name="Fulton R.S."/>
            <person name="Fulton L.A."/>
            <person name="Clifton S.W."/>
            <person name="Wilson R.K."/>
            <person name="Knight R.D."/>
            <person name="Gordon J.I."/>
        </authorList>
    </citation>
    <scope>NUCLEOTIDE SEQUENCE [LARGE SCALE GENOMIC DNA]</scope>
    <source>
        <strain>ATCC 8482 / DSM 1447 / JCM 5826 / CCUG 4940 / NBRC 14291 / NCTC 11154</strain>
    </source>
</reference>
<gene>
    <name evidence="1" type="primary">rplF</name>
    <name type="ordered locus">BVU_0790</name>
</gene>
<name>RL6_PHOV8</name>